<evidence type="ECO:0000250" key="1"/>
<evidence type="ECO:0000255" key="2"/>
<evidence type="ECO:0000256" key="3">
    <source>
        <dbReference type="SAM" id="MobiDB-lite"/>
    </source>
</evidence>
<evidence type="ECO:0000269" key="4">
    <source>
    </source>
</evidence>
<evidence type="ECO:0000305" key="5"/>
<reference key="1">
    <citation type="journal article" date="2002" name="Nature">
        <title>The genome sequence of Schizosaccharomyces pombe.</title>
        <authorList>
            <person name="Wood V."/>
            <person name="Gwilliam R."/>
            <person name="Rajandream M.A."/>
            <person name="Lyne M.H."/>
            <person name="Lyne R."/>
            <person name="Stewart A."/>
            <person name="Sgouros J.G."/>
            <person name="Peat N."/>
            <person name="Hayles J."/>
            <person name="Baker S.G."/>
            <person name="Basham D."/>
            <person name="Bowman S."/>
            <person name="Brooks K."/>
            <person name="Brown D."/>
            <person name="Brown S."/>
            <person name="Chillingworth T."/>
            <person name="Churcher C.M."/>
            <person name="Collins M."/>
            <person name="Connor R."/>
            <person name="Cronin A."/>
            <person name="Davis P."/>
            <person name="Feltwell T."/>
            <person name="Fraser A."/>
            <person name="Gentles S."/>
            <person name="Goble A."/>
            <person name="Hamlin N."/>
            <person name="Harris D.E."/>
            <person name="Hidalgo J."/>
            <person name="Hodgson G."/>
            <person name="Holroyd S."/>
            <person name="Hornsby T."/>
            <person name="Howarth S."/>
            <person name="Huckle E.J."/>
            <person name="Hunt S."/>
            <person name="Jagels K."/>
            <person name="James K.D."/>
            <person name="Jones L."/>
            <person name="Jones M."/>
            <person name="Leather S."/>
            <person name="McDonald S."/>
            <person name="McLean J."/>
            <person name="Mooney P."/>
            <person name="Moule S."/>
            <person name="Mungall K.L."/>
            <person name="Murphy L.D."/>
            <person name="Niblett D."/>
            <person name="Odell C."/>
            <person name="Oliver K."/>
            <person name="O'Neil S."/>
            <person name="Pearson D."/>
            <person name="Quail M.A."/>
            <person name="Rabbinowitsch E."/>
            <person name="Rutherford K.M."/>
            <person name="Rutter S."/>
            <person name="Saunders D."/>
            <person name="Seeger K."/>
            <person name="Sharp S."/>
            <person name="Skelton J."/>
            <person name="Simmonds M.N."/>
            <person name="Squares R."/>
            <person name="Squares S."/>
            <person name="Stevens K."/>
            <person name="Taylor K."/>
            <person name="Taylor R.G."/>
            <person name="Tivey A."/>
            <person name="Walsh S.V."/>
            <person name="Warren T."/>
            <person name="Whitehead S."/>
            <person name="Woodward J.R."/>
            <person name="Volckaert G."/>
            <person name="Aert R."/>
            <person name="Robben J."/>
            <person name="Grymonprez B."/>
            <person name="Weltjens I."/>
            <person name="Vanstreels E."/>
            <person name="Rieger M."/>
            <person name="Schaefer M."/>
            <person name="Mueller-Auer S."/>
            <person name="Gabel C."/>
            <person name="Fuchs M."/>
            <person name="Duesterhoeft A."/>
            <person name="Fritzc C."/>
            <person name="Holzer E."/>
            <person name="Moestl D."/>
            <person name="Hilbert H."/>
            <person name="Borzym K."/>
            <person name="Langer I."/>
            <person name="Beck A."/>
            <person name="Lehrach H."/>
            <person name="Reinhardt R."/>
            <person name="Pohl T.M."/>
            <person name="Eger P."/>
            <person name="Zimmermann W."/>
            <person name="Wedler H."/>
            <person name="Wambutt R."/>
            <person name="Purnelle B."/>
            <person name="Goffeau A."/>
            <person name="Cadieu E."/>
            <person name="Dreano S."/>
            <person name="Gloux S."/>
            <person name="Lelaure V."/>
            <person name="Mottier S."/>
            <person name="Galibert F."/>
            <person name="Aves S.J."/>
            <person name="Xiang Z."/>
            <person name="Hunt C."/>
            <person name="Moore K."/>
            <person name="Hurst S.M."/>
            <person name="Lucas M."/>
            <person name="Rochet M."/>
            <person name="Gaillardin C."/>
            <person name="Tallada V.A."/>
            <person name="Garzon A."/>
            <person name="Thode G."/>
            <person name="Daga R.R."/>
            <person name="Cruzado L."/>
            <person name="Jimenez J."/>
            <person name="Sanchez M."/>
            <person name="del Rey F."/>
            <person name="Benito J."/>
            <person name="Dominguez A."/>
            <person name="Revuelta J.L."/>
            <person name="Moreno S."/>
            <person name="Armstrong J."/>
            <person name="Forsburg S.L."/>
            <person name="Cerutti L."/>
            <person name="Lowe T."/>
            <person name="McCombie W.R."/>
            <person name="Paulsen I."/>
            <person name="Potashkin J."/>
            <person name="Shpakovski G.V."/>
            <person name="Ussery D."/>
            <person name="Barrell B.G."/>
            <person name="Nurse P."/>
        </authorList>
    </citation>
    <scope>NUCLEOTIDE SEQUENCE [LARGE SCALE GENOMIC DNA]</scope>
    <source>
        <strain>972 / ATCC 24843</strain>
    </source>
</reference>
<reference key="2">
    <citation type="journal article" date="2008" name="J. Proteome Res.">
        <title>Phosphoproteome analysis of fission yeast.</title>
        <authorList>
            <person name="Wilson-Grady J.T."/>
            <person name="Villen J."/>
            <person name="Gygi S.P."/>
        </authorList>
    </citation>
    <scope>PHOSPHORYLATION [LARGE SCALE ANALYSIS] AT SER-75</scope>
    <scope>IDENTIFICATION BY MASS SPECTROMETRY</scope>
</reference>
<feature type="chain" id="PRO_0000097660" description="Rab guanine nucleotide exchange factor sec2">
    <location>
        <begin position="1"/>
        <end position="527"/>
    </location>
</feature>
<feature type="region of interest" description="Disordered" evidence="3">
    <location>
        <begin position="233"/>
        <end position="305"/>
    </location>
</feature>
<feature type="region of interest" description="Disordered" evidence="3">
    <location>
        <begin position="342"/>
        <end position="376"/>
    </location>
</feature>
<feature type="coiled-coil region" evidence="2">
    <location>
        <begin position="40"/>
        <end position="171"/>
    </location>
</feature>
<feature type="compositionally biased region" description="Polar residues" evidence="3">
    <location>
        <begin position="256"/>
        <end position="270"/>
    </location>
</feature>
<feature type="compositionally biased region" description="Low complexity" evidence="3">
    <location>
        <begin position="271"/>
        <end position="305"/>
    </location>
</feature>
<feature type="compositionally biased region" description="Polar residues" evidence="3">
    <location>
        <begin position="342"/>
        <end position="361"/>
    </location>
</feature>
<feature type="compositionally biased region" description="Low complexity" evidence="3">
    <location>
        <begin position="362"/>
        <end position="376"/>
    </location>
</feature>
<feature type="modified residue" description="Phosphoserine" evidence="4">
    <location>
        <position position="75"/>
    </location>
</feature>
<name>SEC2_SCHPO</name>
<dbReference type="EMBL" id="CU329670">
    <property type="protein sequence ID" value="CAB16881.1"/>
    <property type="molecule type" value="Genomic_DNA"/>
</dbReference>
<dbReference type="PIR" id="T38265">
    <property type="entry name" value="T38265"/>
</dbReference>
<dbReference type="RefSeq" id="NP_593182.1">
    <property type="nucleotide sequence ID" value="NM_001018578.2"/>
</dbReference>
<dbReference type="SMR" id="O13930"/>
<dbReference type="BioGRID" id="278418">
    <property type="interactions" value="20"/>
</dbReference>
<dbReference type="FunCoup" id="O13930">
    <property type="interactions" value="6"/>
</dbReference>
<dbReference type="STRING" id="284812.O13930"/>
<dbReference type="iPTMnet" id="O13930"/>
<dbReference type="PaxDb" id="4896-SPAC23C4.10.1"/>
<dbReference type="EnsemblFungi" id="SPAC23C4.10.1">
    <property type="protein sequence ID" value="SPAC23C4.10.1:pep"/>
    <property type="gene ID" value="SPAC23C4.10"/>
</dbReference>
<dbReference type="GeneID" id="2541930"/>
<dbReference type="KEGG" id="spo:2541930"/>
<dbReference type="PomBase" id="SPAC23C4.10">
    <property type="gene designation" value="sec2"/>
</dbReference>
<dbReference type="VEuPathDB" id="FungiDB:SPAC23C4.10"/>
<dbReference type="eggNOG" id="KOG4324">
    <property type="taxonomic scope" value="Eukaryota"/>
</dbReference>
<dbReference type="HOGENOM" id="CLU_009486_1_1_1"/>
<dbReference type="InParanoid" id="O13930"/>
<dbReference type="OMA" id="CCEFTGY"/>
<dbReference type="PhylomeDB" id="O13930"/>
<dbReference type="Reactome" id="R-SPO-5620912">
    <property type="pathway name" value="Anchoring of the basal body to the plasma membrane"/>
</dbReference>
<dbReference type="Reactome" id="R-SPO-8876198">
    <property type="pathway name" value="RAB GEFs exchange GTP for GDP on RABs"/>
</dbReference>
<dbReference type="PRO" id="PR:O13930"/>
<dbReference type="Proteomes" id="UP000002485">
    <property type="component" value="Chromosome I"/>
</dbReference>
<dbReference type="GO" id="GO:0051285">
    <property type="term" value="C:cell cortex of cell tip"/>
    <property type="evidence" value="ECO:0000314"/>
    <property type="project" value="PomBase"/>
</dbReference>
<dbReference type="GO" id="GO:0032153">
    <property type="term" value="C:cell division site"/>
    <property type="evidence" value="ECO:0007005"/>
    <property type="project" value="PomBase"/>
</dbReference>
<dbReference type="GO" id="GO:0051286">
    <property type="term" value="C:cell tip"/>
    <property type="evidence" value="ECO:0007005"/>
    <property type="project" value="PomBase"/>
</dbReference>
<dbReference type="GO" id="GO:0071341">
    <property type="term" value="C:medial cortical node"/>
    <property type="evidence" value="ECO:0000314"/>
    <property type="project" value="PomBase"/>
</dbReference>
<dbReference type="GO" id="GO:0090619">
    <property type="term" value="C:meiotic spindle pole"/>
    <property type="evidence" value="ECO:0000314"/>
    <property type="project" value="CACAO"/>
</dbReference>
<dbReference type="GO" id="GO:0035974">
    <property type="term" value="C:meiotic spindle pole body"/>
    <property type="evidence" value="ECO:0000314"/>
    <property type="project" value="PomBase"/>
</dbReference>
<dbReference type="GO" id="GO:0005628">
    <property type="term" value="C:prospore membrane"/>
    <property type="evidence" value="ECO:0000314"/>
    <property type="project" value="PomBase"/>
</dbReference>
<dbReference type="GO" id="GO:0005085">
    <property type="term" value="F:guanyl-nucleotide exchange factor activity"/>
    <property type="evidence" value="ECO:0000353"/>
    <property type="project" value="PomBase"/>
</dbReference>
<dbReference type="GO" id="GO:0006887">
    <property type="term" value="P:exocytosis"/>
    <property type="evidence" value="ECO:0000266"/>
    <property type="project" value="PomBase"/>
</dbReference>
<dbReference type="GO" id="GO:0006886">
    <property type="term" value="P:intracellular protein transport"/>
    <property type="evidence" value="ECO:0000305"/>
    <property type="project" value="PomBase"/>
</dbReference>
<dbReference type="CDD" id="cd21044">
    <property type="entry name" value="Rab11BD_RAB3IP_like"/>
    <property type="match status" value="1"/>
</dbReference>
<dbReference type="Gene3D" id="6.10.140.910">
    <property type="match status" value="1"/>
</dbReference>
<dbReference type="InterPro" id="IPR040351">
    <property type="entry name" value="RAB3IL/RAB3IP/Sec2"/>
</dbReference>
<dbReference type="InterPro" id="IPR009449">
    <property type="entry name" value="Sec2_N"/>
</dbReference>
<dbReference type="PANTHER" id="PTHR14430">
    <property type="entry name" value="RABIN3-RELATED"/>
    <property type="match status" value="1"/>
</dbReference>
<dbReference type="PANTHER" id="PTHR14430:SF0">
    <property type="entry name" value="SEC2P DOMAIN-CONTAINING PROTEIN"/>
    <property type="match status" value="1"/>
</dbReference>
<dbReference type="Pfam" id="PF06428">
    <property type="entry name" value="Sec2p"/>
    <property type="match status" value="1"/>
</dbReference>
<dbReference type="SUPFAM" id="SSF144284">
    <property type="entry name" value="Sec2 N-terminal region"/>
    <property type="match status" value="1"/>
</dbReference>
<sequence>MPDVSNVRVKPNQHPYEKEVNGKLMSQEEILSQKLVAAIERQAALDDKYATEVHRNEALSERIRELEAKLSAKKSFDEELVKFHNLEEKLQLTETKCRNAESEKSRVENELEDLTSSLFEEANRMVANARKETVASEKRVNQLKKQLVDAETLLSSTQHQLTELKDVMHSMSDSHEQNNALHPPLSRTTSFVADNVSVGSFASSTSGLDILTGTSARESLDAKEISSDKHLNISGERPATFPNPTFIEGSDERRSASSLGHRTNNNQNQLIRFSTQIRSSSTSPPRSPLIISDSPSSSIIHNPHPTHPSASAMNYMNPCFLEFHAFFNYPMKFARSRSAYSTSANYSNTPPRNTVTPSTARSSTLSQNPSSSSNSIPLISRNLRDFSFFKRCLEEDIEPTLRLDHASGLSWLTRRSVFTAILESSLIINPLHSTSLLSSQPCSLCGFNRTQPLRQFEFRSRPDSTSHASCTYCVARLRSVCNFVAFLHQICKGVWSSCSLEKAWDECLKKREAMFLSRVGLAKELEG</sequence>
<accession>O13930</accession>
<protein>
    <recommendedName>
        <fullName>Rab guanine nucleotide exchange factor sec2</fullName>
    </recommendedName>
    <alternativeName>
        <fullName>GDP-GTP exchange factor sec2</fullName>
    </alternativeName>
</protein>
<keyword id="KW-0175">Coiled coil</keyword>
<keyword id="KW-0344">Guanine-nucleotide releasing factor</keyword>
<keyword id="KW-0597">Phosphoprotein</keyword>
<keyword id="KW-0653">Protein transport</keyword>
<keyword id="KW-1185">Reference proteome</keyword>
<keyword id="KW-0813">Transport</keyword>
<gene>
    <name type="primary">sec2</name>
    <name type="ORF">SPAC23C4.10</name>
</gene>
<comment type="function">
    <text evidence="1">Guanyl-nucleotide exchange factor for ypt2. Catalyzing the dissociation of GDP from ypt2 and promotes the binding of GTP (By similarity).</text>
</comment>
<comment type="similarity">
    <text evidence="5">Belongs to the SEC2 family.</text>
</comment>
<organism>
    <name type="scientific">Schizosaccharomyces pombe (strain 972 / ATCC 24843)</name>
    <name type="common">Fission yeast</name>
    <dbReference type="NCBI Taxonomy" id="284812"/>
    <lineage>
        <taxon>Eukaryota</taxon>
        <taxon>Fungi</taxon>
        <taxon>Dikarya</taxon>
        <taxon>Ascomycota</taxon>
        <taxon>Taphrinomycotina</taxon>
        <taxon>Schizosaccharomycetes</taxon>
        <taxon>Schizosaccharomycetales</taxon>
        <taxon>Schizosaccharomycetaceae</taxon>
        <taxon>Schizosaccharomyces</taxon>
    </lineage>
</organism>
<proteinExistence type="evidence at protein level"/>